<accession>P86184</accession>
<proteinExistence type="evidence at protein level"/>
<name>LECA_CYMRO</name>
<sequence length="237" mass="25326">ADTIVAVELDSYPNTDIGDPSYPHIGIDIKSIRSKSTARWNMQTGKVGTAHISYNSVAKRLTAVVSYSGSSSTTVSYDVDLNNVLPEWVRVGLSATTGLYKETNTILSWSFTSKLKTNSIADANALHFSFHQFTQNPKDLILQGDATTDSDGNLELTKVSSSGSPQGSSVGRALFYAPVHIWESSAVVASFDATFTFLIKSPDSEPADGITFFIANTDTSIPSGSSGRLLGLFPDAN</sequence>
<keyword id="KW-0002">3D-structure</keyword>
<keyword id="KW-0106">Calcium</keyword>
<keyword id="KW-0903">Direct protein sequencing</keyword>
<keyword id="KW-0430">Lectin</keyword>
<keyword id="KW-0464">Manganese</keyword>
<keyword id="KW-0465">Mannose-binding</keyword>
<keyword id="KW-0479">Metal-binding</keyword>
<protein>
    <recommendedName>
        <fullName evidence="5">Mannose-specific lectin alpha chain</fullName>
    </recommendedName>
    <component>
        <recommendedName>
            <fullName evidence="5">Mannose-specific lectin beta chain</fullName>
        </recommendedName>
    </component>
    <component>
        <recommendedName>
            <fullName evidence="5">Mannose-specific lectin gamma chain</fullName>
        </recommendedName>
    </component>
</protein>
<feature type="chain" id="PRO_0000394798" description="Mannose-specific lectin alpha chain">
    <location>
        <begin position="1"/>
        <end position="237"/>
    </location>
</feature>
<feature type="chain" id="PRO_0000394799" description="Mannose-specific lectin beta chain" evidence="4">
    <location>
        <begin position="1"/>
        <end position="118"/>
    </location>
</feature>
<feature type="chain" id="PRO_0000394800" description="Mannose-specific lectin gamma chain" evidence="4">
    <location>
        <begin position="119"/>
        <end position="237"/>
    </location>
</feature>
<feature type="binding site" evidence="2">
    <location>
        <position position="8"/>
    </location>
    <ligand>
        <name>Mn(2+)</name>
        <dbReference type="ChEBI" id="CHEBI:29035"/>
    </ligand>
</feature>
<feature type="binding site" evidence="2">
    <location>
        <position position="10"/>
    </location>
    <ligand>
        <name>Ca(2+)</name>
        <dbReference type="ChEBI" id="CHEBI:29108"/>
    </ligand>
</feature>
<feature type="binding site" evidence="2">
    <location>
        <position position="10"/>
    </location>
    <ligand>
        <name>Mn(2+)</name>
        <dbReference type="ChEBI" id="CHEBI:29035"/>
    </ligand>
</feature>
<feature type="binding site" evidence="1">
    <location>
        <position position="12"/>
    </location>
    <ligand>
        <name>a carbohydrate</name>
        <dbReference type="ChEBI" id="CHEBI:16646"/>
    </ligand>
</feature>
<feature type="binding site" evidence="2">
    <location>
        <position position="12"/>
    </location>
    <ligand>
        <name>Ca(2+)</name>
        <dbReference type="ChEBI" id="CHEBI:29108"/>
    </ligand>
</feature>
<feature type="binding site" evidence="2">
    <location>
        <position position="14"/>
    </location>
    <ligand>
        <name>Ca(2+)</name>
        <dbReference type="ChEBI" id="CHEBI:29108"/>
    </ligand>
</feature>
<feature type="binding site" evidence="2">
    <location>
        <position position="19"/>
    </location>
    <ligand>
        <name>Ca(2+)</name>
        <dbReference type="ChEBI" id="CHEBI:29108"/>
    </ligand>
</feature>
<feature type="binding site" evidence="2">
    <location>
        <position position="19"/>
    </location>
    <ligand>
        <name>Mn(2+)</name>
        <dbReference type="ChEBI" id="CHEBI:29035"/>
    </ligand>
</feature>
<feature type="binding site" evidence="2">
    <location>
        <position position="24"/>
    </location>
    <ligand>
        <name>Mn(2+)</name>
        <dbReference type="ChEBI" id="CHEBI:29035"/>
    </ligand>
</feature>
<feature type="binding site" evidence="1">
    <location>
        <position position="34"/>
    </location>
    <ligand>
        <name>Mn(2+)</name>
        <dbReference type="ChEBI" id="CHEBI:29035"/>
    </ligand>
</feature>
<feature type="binding site" evidence="1">
    <location>
        <begin position="99"/>
        <end position="100"/>
    </location>
    <ligand>
        <name>a carbohydrate</name>
        <dbReference type="ChEBI" id="CHEBI:16646"/>
    </ligand>
</feature>
<feature type="binding site" evidence="2">
    <location>
        <position position="208"/>
    </location>
    <ligand>
        <name>Ca(2+)</name>
        <dbReference type="ChEBI" id="CHEBI:29108"/>
    </ligand>
</feature>
<feature type="binding site" evidence="1">
    <location>
        <position position="228"/>
    </location>
    <ligand>
        <name>a carbohydrate</name>
        <dbReference type="ChEBI" id="CHEBI:16646"/>
    </ligand>
</feature>
<feature type="strand" evidence="7">
    <location>
        <begin position="4"/>
        <end position="10"/>
    </location>
</feature>
<feature type="helix" evidence="7">
    <location>
        <begin position="15"/>
        <end position="17"/>
    </location>
</feature>
<feature type="strand" evidence="7">
    <location>
        <begin position="24"/>
        <end position="33"/>
    </location>
</feature>
<feature type="strand" evidence="7">
    <location>
        <begin position="35"/>
        <end position="39"/>
    </location>
</feature>
<feature type="strand" evidence="7">
    <location>
        <begin position="46"/>
        <end position="55"/>
    </location>
</feature>
<feature type="turn" evidence="7">
    <location>
        <begin position="56"/>
        <end position="59"/>
    </location>
</feature>
<feature type="strand" evidence="7">
    <location>
        <begin position="60"/>
        <end position="67"/>
    </location>
</feature>
<feature type="turn" evidence="7">
    <location>
        <begin position="68"/>
        <end position="70"/>
    </location>
</feature>
<feature type="strand" evidence="7">
    <location>
        <begin position="71"/>
        <end position="78"/>
    </location>
</feature>
<feature type="helix" evidence="7">
    <location>
        <begin position="81"/>
        <end position="83"/>
    </location>
</feature>
<feature type="strand" evidence="7">
    <location>
        <begin position="87"/>
        <end position="96"/>
    </location>
</feature>
<feature type="strand" evidence="7">
    <location>
        <begin position="105"/>
        <end position="116"/>
    </location>
</feature>
<feature type="strand" evidence="7">
    <location>
        <begin position="118"/>
        <end position="121"/>
    </location>
</feature>
<feature type="strand" evidence="7">
    <location>
        <begin position="123"/>
        <end position="132"/>
    </location>
</feature>
<feature type="strand" evidence="7">
    <location>
        <begin position="140"/>
        <end position="144"/>
    </location>
</feature>
<feature type="strand" evidence="7">
    <location>
        <begin position="154"/>
        <end position="157"/>
    </location>
</feature>
<feature type="strand" evidence="7">
    <location>
        <begin position="170"/>
        <end position="177"/>
    </location>
</feature>
<feature type="strand" evidence="7">
    <location>
        <begin position="187"/>
        <end position="198"/>
    </location>
</feature>
<feature type="strand" evidence="7">
    <location>
        <begin position="203"/>
        <end position="205"/>
    </location>
</feature>
<feature type="strand" evidence="7">
    <location>
        <begin position="209"/>
        <end position="216"/>
    </location>
</feature>
<feature type="helix" evidence="7">
    <location>
        <begin position="227"/>
        <end position="229"/>
    </location>
</feature>
<feature type="turn" evidence="7">
    <location>
        <begin position="230"/>
        <end position="232"/>
    </location>
</feature>
<evidence type="ECO:0000250" key="1"/>
<evidence type="ECO:0000250" key="2">
    <source>
        <dbReference type="UniProtKB" id="P81637"/>
    </source>
</evidence>
<evidence type="ECO:0000255" key="3"/>
<evidence type="ECO:0000269" key="4">
    <source ref="1"/>
</evidence>
<evidence type="ECO:0000303" key="5">
    <source ref="1"/>
</evidence>
<evidence type="ECO:0000305" key="6"/>
<evidence type="ECO:0007829" key="7">
    <source>
        <dbReference type="PDB" id="4MYE"/>
    </source>
</evidence>
<comment type="function">
    <text evidence="4">D-mannose/D-glucose-binding lectin. Also binds derivatives of glucose and mannose such as more complex glycans.</text>
</comment>
<comment type="subunit">
    <text evidence="4">Homotetramer.</text>
</comment>
<comment type="PTM">
    <text evidence="2 4">The beta and gamma chains are produced by partial proteolytic processing of the lectin alpha chain by an asparaginyl endopeptidase.</text>
</comment>
<comment type="mass spectrometry" mass="25326.0" error="0.5" method="Electrospray" evidence="4">
    <molecule>Mannose-specific lectin alpha chain</molecule>
</comment>
<comment type="mass spectrometry" mass="25325.0" error="1.0" method="MALDI" evidence="4">
    <molecule>Mannose-specific lectin alpha chain</molecule>
</comment>
<comment type="miscellaneous">
    <text evidence="1">Binds one manganese (or another transition metal) ion and one calcium ion. The metal ions are essential for the saccharide-binding and cell-agglutinating activities (By similarity).</text>
</comment>
<comment type="similarity">
    <text evidence="3">Belongs to the leguminous lectin family.</text>
</comment>
<reference evidence="6" key="1">
    <citation type="submission" date="2009-01" db="UniProtKB">
        <title>Crystal structure of an antiinflammatory legume lectin.</title>
        <authorList>
            <person name="Rocha B.A.M."/>
            <person name="Delatorre P."/>
            <person name="Marinho E.S."/>
            <person name="Benevides R.G."/>
            <person name="Moura T.R."/>
            <person name="Sousa L.A.G."/>
            <person name="Nascimento K.S."/>
            <person name="Sampaio A.H."/>
            <person name="Cavada B.S."/>
        </authorList>
    </citation>
    <scope>PROTEIN SEQUENCE</scope>
    <scope>FUNCTION</scope>
    <scope>SUBUNIT</scope>
    <scope>MASS SPECTROMETRY</scope>
    <source>
        <tissue evidence="4">Seed</tissue>
    </source>
</reference>
<dbReference type="PDB" id="4MYE">
    <property type="method" value="X-ray"/>
    <property type="resolution" value="1.65 A"/>
    <property type="chains" value="A=1-237"/>
</dbReference>
<dbReference type="PDBsum" id="4MYE"/>
<dbReference type="SMR" id="P86184"/>
<dbReference type="EvolutionaryTrace" id="P86184"/>
<dbReference type="GO" id="GO:0005537">
    <property type="term" value="F:D-mannose binding"/>
    <property type="evidence" value="ECO:0007669"/>
    <property type="project" value="UniProtKB-KW"/>
</dbReference>
<dbReference type="GO" id="GO:0046872">
    <property type="term" value="F:metal ion binding"/>
    <property type="evidence" value="ECO:0007669"/>
    <property type="project" value="UniProtKB-KW"/>
</dbReference>
<dbReference type="FunFam" id="2.60.120.200:FF:000227">
    <property type="entry name" value="Concanavalin-A"/>
    <property type="match status" value="1"/>
</dbReference>
<dbReference type="Gene3D" id="2.60.120.200">
    <property type="match status" value="1"/>
</dbReference>
<dbReference type="InterPro" id="IPR013320">
    <property type="entry name" value="ConA-like_dom_sf"/>
</dbReference>
<dbReference type="InterPro" id="IPR000985">
    <property type="entry name" value="Lectin_LegA_CS"/>
</dbReference>
<dbReference type="InterPro" id="IPR019825">
    <property type="entry name" value="Lectin_legB_Mn/Ca_BS"/>
</dbReference>
<dbReference type="InterPro" id="IPR001220">
    <property type="entry name" value="Legume_lectin_dom"/>
</dbReference>
<dbReference type="InterPro" id="IPR050258">
    <property type="entry name" value="Leguminous_Lectin"/>
</dbReference>
<dbReference type="PANTHER" id="PTHR32401">
    <property type="entry name" value="CONCANAVALIN A-LIKE LECTIN FAMILY PROTEIN"/>
    <property type="match status" value="1"/>
</dbReference>
<dbReference type="PANTHER" id="PTHR32401:SF47">
    <property type="entry name" value="LEGUME LECTIN DOMAIN-CONTAINING PROTEIN"/>
    <property type="match status" value="1"/>
</dbReference>
<dbReference type="Pfam" id="PF00139">
    <property type="entry name" value="Lectin_legB"/>
    <property type="match status" value="2"/>
</dbReference>
<dbReference type="SUPFAM" id="SSF49899">
    <property type="entry name" value="Concanavalin A-like lectins/glucanases"/>
    <property type="match status" value="1"/>
</dbReference>
<dbReference type="PROSITE" id="PS00308">
    <property type="entry name" value="LECTIN_LEGUME_ALPHA"/>
    <property type="match status" value="1"/>
</dbReference>
<dbReference type="PROSITE" id="PS00307">
    <property type="entry name" value="LECTIN_LEGUME_BETA"/>
    <property type="match status" value="1"/>
</dbReference>
<organism>
    <name type="scientific">Cymbosema roseum</name>
    <name type="common">Dioclea purpurea</name>
    <dbReference type="NCBI Taxonomy" id="202239"/>
    <lineage>
        <taxon>Eukaryota</taxon>
        <taxon>Viridiplantae</taxon>
        <taxon>Streptophyta</taxon>
        <taxon>Embryophyta</taxon>
        <taxon>Tracheophyta</taxon>
        <taxon>Spermatophyta</taxon>
        <taxon>Magnoliopsida</taxon>
        <taxon>eudicotyledons</taxon>
        <taxon>Gunneridae</taxon>
        <taxon>Pentapetalae</taxon>
        <taxon>rosids</taxon>
        <taxon>fabids</taxon>
        <taxon>Fabales</taxon>
        <taxon>Fabaceae</taxon>
        <taxon>Papilionoideae</taxon>
        <taxon>50 kb inversion clade</taxon>
        <taxon>NPAAA clade</taxon>
        <taxon>indigoferoid/millettioid clade</taxon>
        <taxon>Phaseoleae</taxon>
        <taxon>Cymbosema</taxon>
    </lineage>
</organism>